<gene>
    <name evidence="1" type="primary">rplS</name>
    <name type="ordered locus">LA_2387</name>
</gene>
<organism>
    <name type="scientific">Leptospira interrogans serogroup Icterohaemorrhagiae serovar Lai (strain 56601)</name>
    <dbReference type="NCBI Taxonomy" id="189518"/>
    <lineage>
        <taxon>Bacteria</taxon>
        <taxon>Pseudomonadati</taxon>
        <taxon>Spirochaetota</taxon>
        <taxon>Spirochaetia</taxon>
        <taxon>Leptospirales</taxon>
        <taxon>Leptospiraceae</taxon>
        <taxon>Leptospira</taxon>
    </lineage>
</organism>
<comment type="function">
    <text evidence="1">This protein is located at the 30S-50S ribosomal subunit interface and may play a role in the structure and function of the aminoacyl-tRNA binding site.</text>
</comment>
<comment type="similarity">
    <text evidence="1">Belongs to the bacterial ribosomal protein bL19 family.</text>
</comment>
<reference key="1">
    <citation type="journal article" date="2003" name="Nature">
        <title>Unique physiological and pathogenic features of Leptospira interrogans revealed by whole-genome sequencing.</title>
        <authorList>
            <person name="Ren S.-X."/>
            <person name="Fu G."/>
            <person name="Jiang X.-G."/>
            <person name="Zeng R."/>
            <person name="Miao Y.-G."/>
            <person name="Xu H."/>
            <person name="Zhang Y.-X."/>
            <person name="Xiong H."/>
            <person name="Lu G."/>
            <person name="Lu L.-F."/>
            <person name="Jiang H.-Q."/>
            <person name="Jia J."/>
            <person name="Tu Y.-F."/>
            <person name="Jiang J.-X."/>
            <person name="Gu W.-Y."/>
            <person name="Zhang Y.-Q."/>
            <person name="Cai Z."/>
            <person name="Sheng H.-H."/>
            <person name="Yin H.-F."/>
            <person name="Zhang Y."/>
            <person name="Zhu G.-F."/>
            <person name="Wan M."/>
            <person name="Huang H.-L."/>
            <person name="Qian Z."/>
            <person name="Wang S.-Y."/>
            <person name="Ma W."/>
            <person name="Yao Z.-J."/>
            <person name="Shen Y."/>
            <person name="Qiang B.-Q."/>
            <person name="Xia Q.-C."/>
            <person name="Guo X.-K."/>
            <person name="Danchin A."/>
            <person name="Saint Girons I."/>
            <person name="Somerville R.L."/>
            <person name="Wen Y.-M."/>
            <person name="Shi M.-H."/>
            <person name="Chen Z."/>
            <person name="Xu J.-G."/>
            <person name="Zhao G.-P."/>
        </authorList>
    </citation>
    <scope>NUCLEOTIDE SEQUENCE [LARGE SCALE GENOMIC DNA]</scope>
    <source>
        <strain>56601</strain>
    </source>
</reference>
<feature type="chain" id="PRO_0000163476" description="Large ribosomal subunit protein bL19">
    <location>
        <begin position="1"/>
        <end position="138"/>
    </location>
</feature>
<name>RL19_LEPIN</name>
<protein>
    <recommendedName>
        <fullName evidence="1">Large ribosomal subunit protein bL19</fullName>
    </recommendedName>
    <alternativeName>
        <fullName evidence="2">50S ribosomal protein L19</fullName>
    </alternativeName>
</protein>
<sequence length="138" mass="15550">MNQLLREVLTPDAERTQNFTVGDTVKVHYKIVESGKERVQIYEGVVISVANEANGKTFTVRRVSYDVGVERIFPLFSPRIAKIELIRKGKVRRAKLYYLRNLAGKAARIKELKGGKALVSEDRKRQQAAAATKSTTTE</sequence>
<evidence type="ECO:0000255" key="1">
    <source>
        <dbReference type="HAMAP-Rule" id="MF_00402"/>
    </source>
</evidence>
<evidence type="ECO:0000305" key="2"/>
<dbReference type="EMBL" id="AE010300">
    <property type="protein sequence ID" value="AAN49586.1"/>
    <property type="molecule type" value="Genomic_DNA"/>
</dbReference>
<dbReference type="RefSeq" id="NP_712568.1">
    <property type="nucleotide sequence ID" value="NC_004342.2"/>
</dbReference>
<dbReference type="RefSeq" id="WP_001072661.1">
    <property type="nucleotide sequence ID" value="NC_004342.2"/>
</dbReference>
<dbReference type="SMR" id="Q8F3L4"/>
<dbReference type="FunCoup" id="Q8F3L4">
    <property type="interactions" value="578"/>
</dbReference>
<dbReference type="STRING" id="189518.LA_2387"/>
<dbReference type="PaxDb" id="189518-LA_2387"/>
<dbReference type="EnsemblBacteria" id="AAN49586">
    <property type="protein sequence ID" value="AAN49586"/>
    <property type="gene ID" value="LA_2387"/>
</dbReference>
<dbReference type="KEGG" id="lil:LA_2387"/>
<dbReference type="PATRIC" id="fig|189518.3.peg.2368"/>
<dbReference type="HOGENOM" id="CLU_103507_2_1_12"/>
<dbReference type="InParanoid" id="Q8F3L4"/>
<dbReference type="OrthoDB" id="9803541at2"/>
<dbReference type="Proteomes" id="UP000001408">
    <property type="component" value="Chromosome I"/>
</dbReference>
<dbReference type="GO" id="GO:0022625">
    <property type="term" value="C:cytosolic large ribosomal subunit"/>
    <property type="evidence" value="ECO:0000318"/>
    <property type="project" value="GO_Central"/>
</dbReference>
<dbReference type="GO" id="GO:0003735">
    <property type="term" value="F:structural constituent of ribosome"/>
    <property type="evidence" value="ECO:0000318"/>
    <property type="project" value="GO_Central"/>
</dbReference>
<dbReference type="GO" id="GO:0006412">
    <property type="term" value="P:translation"/>
    <property type="evidence" value="ECO:0007669"/>
    <property type="project" value="UniProtKB-UniRule"/>
</dbReference>
<dbReference type="FunFam" id="2.30.30.790:FF:000001">
    <property type="entry name" value="50S ribosomal protein L19"/>
    <property type="match status" value="1"/>
</dbReference>
<dbReference type="Gene3D" id="2.30.30.790">
    <property type="match status" value="1"/>
</dbReference>
<dbReference type="HAMAP" id="MF_00402">
    <property type="entry name" value="Ribosomal_bL19"/>
    <property type="match status" value="1"/>
</dbReference>
<dbReference type="InterPro" id="IPR001857">
    <property type="entry name" value="Ribosomal_bL19"/>
</dbReference>
<dbReference type="InterPro" id="IPR018257">
    <property type="entry name" value="Ribosomal_bL19_CS"/>
</dbReference>
<dbReference type="InterPro" id="IPR038657">
    <property type="entry name" value="Ribosomal_bL19_sf"/>
</dbReference>
<dbReference type="InterPro" id="IPR008991">
    <property type="entry name" value="Translation_prot_SH3-like_sf"/>
</dbReference>
<dbReference type="NCBIfam" id="TIGR01024">
    <property type="entry name" value="rplS_bact"/>
    <property type="match status" value="1"/>
</dbReference>
<dbReference type="PANTHER" id="PTHR15680:SF9">
    <property type="entry name" value="LARGE RIBOSOMAL SUBUNIT PROTEIN BL19M"/>
    <property type="match status" value="1"/>
</dbReference>
<dbReference type="PANTHER" id="PTHR15680">
    <property type="entry name" value="RIBOSOMAL PROTEIN L19"/>
    <property type="match status" value="1"/>
</dbReference>
<dbReference type="Pfam" id="PF01245">
    <property type="entry name" value="Ribosomal_L19"/>
    <property type="match status" value="1"/>
</dbReference>
<dbReference type="PIRSF" id="PIRSF002191">
    <property type="entry name" value="Ribosomal_L19"/>
    <property type="match status" value="1"/>
</dbReference>
<dbReference type="PRINTS" id="PR00061">
    <property type="entry name" value="RIBOSOMALL19"/>
</dbReference>
<dbReference type="SUPFAM" id="SSF50104">
    <property type="entry name" value="Translation proteins SH3-like domain"/>
    <property type="match status" value="1"/>
</dbReference>
<dbReference type="PROSITE" id="PS01015">
    <property type="entry name" value="RIBOSOMAL_L19"/>
    <property type="match status" value="1"/>
</dbReference>
<accession>Q8F3L4</accession>
<proteinExistence type="inferred from homology"/>
<keyword id="KW-1185">Reference proteome</keyword>
<keyword id="KW-0687">Ribonucleoprotein</keyword>
<keyword id="KW-0689">Ribosomal protein</keyword>